<feature type="chain" id="PRO_0000199165" description="C-phycocyanin beta subunit">
    <location>
        <begin position="1"/>
        <end position="172"/>
    </location>
</feature>
<feature type="binding site" description="covalent" evidence="2">
    <location>
        <position position="82"/>
    </location>
    <ligand>
        <name>(2R,3E)-phycocyanobilin</name>
        <dbReference type="ChEBI" id="CHEBI:85275"/>
        <label>1</label>
    </ligand>
</feature>
<feature type="binding site" description="covalent" evidence="2">
    <location>
        <position position="153"/>
    </location>
    <ligand>
        <name>(2R,3E)-phycocyanobilin</name>
        <dbReference type="ChEBI" id="CHEBI:85275"/>
        <label>2</label>
    </ligand>
</feature>
<feature type="modified residue" description="N4-methylasparagine" evidence="2">
    <location>
        <position position="72"/>
    </location>
</feature>
<evidence type="ECO:0000250" key="1"/>
<evidence type="ECO:0000250" key="2">
    <source>
        <dbReference type="UniProtKB" id="P06539"/>
    </source>
</evidence>
<evidence type="ECO:0000305" key="3"/>
<name>PHCB_SYNY1</name>
<dbReference type="EMBL" id="M33820">
    <property type="protein sequence ID" value="AAA27281.1"/>
    <property type="molecule type" value="Genomic_DNA"/>
</dbReference>
<dbReference type="PIR" id="A35126">
    <property type="entry name" value="A35126"/>
</dbReference>
<dbReference type="SMR" id="P20777"/>
<dbReference type="GO" id="GO:0030089">
    <property type="term" value="C:phycobilisome"/>
    <property type="evidence" value="ECO:0007669"/>
    <property type="project" value="UniProtKB-KW"/>
</dbReference>
<dbReference type="GO" id="GO:0031676">
    <property type="term" value="C:plasma membrane-derived thylakoid membrane"/>
    <property type="evidence" value="ECO:0007669"/>
    <property type="project" value="UniProtKB-SubCell"/>
</dbReference>
<dbReference type="GO" id="GO:0015979">
    <property type="term" value="P:photosynthesis"/>
    <property type="evidence" value="ECO:0007669"/>
    <property type="project" value="UniProtKB-KW"/>
</dbReference>
<dbReference type="CDD" id="cd14768">
    <property type="entry name" value="PC_PEC_beta"/>
    <property type="match status" value="1"/>
</dbReference>
<dbReference type="Gene3D" id="1.10.490.20">
    <property type="entry name" value="Phycocyanins"/>
    <property type="match status" value="1"/>
</dbReference>
<dbReference type="InterPro" id="IPR009050">
    <property type="entry name" value="Globin-like_sf"/>
</dbReference>
<dbReference type="InterPro" id="IPR012128">
    <property type="entry name" value="Phycobilisome_asu/bsu"/>
</dbReference>
<dbReference type="InterPro" id="IPR038719">
    <property type="entry name" value="Phycobilisome_asu/bsu_sf"/>
</dbReference>
<dbReference type="InterPro" id="IPR006247">
    <property type="entry name" value="Phycocyanin_b"/>
</dbReference>
<dbReference type="NCBIfam" id="TIGR01339">
    <property type="entry name" value="phycocy_beta"/>
    <property type="match status" value="1"/>
</dbReference>
<dbReference type="PANTHER" id="PTHR34011:SF7">
    <property type="entry name" value="C-PHYCOCYANIN BETA SUBUNIT"/>
    <property type="match status" value="1"/>
</dbReference>
<dbReference type="PANTHER" id="PTHR34011">
    <property type="entry name" value="PHYCOBILISOME 32.1 KDA LINKER POLYPEPTIDE, PHYCOCYANIN-ASSOCIATED, ROD 2-RELATED"/>
    <property type="match status" value="1"/>
</dbReference>
<dbReference type="Pfam" id="PF00502">
    <property type="entry name" value="Phycobilisome"/>
    <property type="match status" value="1"/>
</dbReference>
<dbReference type="PIRSF" id="PIRSF000081">
    <property type="entry name" value="Phycocyanin"/>
    <property type="match status" value="1"/>
</dbReference>
<dbReference type="SUPFAM" id="SSF46458">
    <property type="entry name" value="Globin-like"/>
    <property type="match status" value="1"/>
</dbReference>
<keyword id="KW-0042">Antenna complex</keyword>
<keyword id="KW-0089">Bile pigment</keyword>
<keyword id="KW-0157">Chromophore</keyword>
<keyword id="KW-0249">Electron transport</keyword>
<keyword id="KW-0472">Membrane</keyword>
<keyword id="KW-0488">Methylation</keyword>
<keyword id="KW-0602">Photosynthesis</keyword>
<keyword id="KW-0605">Phycobilisome</keyword>
<keyword id="KW-0793">Thylakoid</keyword>
<keyword id="KW-0813">Transport</keyword>
<organism>
    <name type="scientific">Synechocystis sp. (strain PCC 6701)</name>
    <dbReference type="NCBI Taxonomy" id="1144"/>
    <lineage>
        <taxon>Bacteria</taxon>
        <taxon>Bacillati</taxon>
        <taxon>Cyanobacteriota</taxon>
        <taxon>Cyanophyceae</taxon>
        <taxon>Oscillatoriophycideae</taxon>
        <taxon>Chroococcales</taxon>
        <taxon>Geminocystaceae</taxon>
        <taxon>Geminocystis</taxon>
    </lineage>
</organism>
<reference key="1">
    <citation type="journal article" date="1990" name="J. Bacteriol.">
        <title>Genes for phycocyanin subunits in Synechocystis sp. strain PCC 6701 and assembly mutant UV16.</title>
        <authorList>
            <person name="Anderson L.K."/>
            <person name="Grossman A.R."/>
        </authorList>
    </citation>
    <scope>NUCLEOTIDE SEQUENCE [GENOMIC DNA]</scope>
</reference>
<sequence>MYDAFTRVVSQRDARGEFLSSAQIDALSKLVSDSNKRIDTVNRITGNASAIVTNAARSLFAEQPQLIAPGGNAYTSRRMAACLRDMEIILRYVTYAIFAGDASVLEDRCLNGLRETYLALGTPGSSVAVGVQKMKDEALAIANDTNGITLGDCSALMAEVATYFDRAAAAVA</sequence>
<comment type="function">
    <text>Light-harvesting photosynthetic bile pigment-protein from the phycobiliprotein complex (phycobilisome, PBS). Phycocyanin is the major phycobiliprotein in the PBS rod.</text>
</comment>
<comment type="subunit">
    <text evidence="2">Heterodimer of an alpha and a beta subunit, which further assembles into trimers and the trimers into hexamers.</text>
</comment>
<comment type="subcellular location">
    <subcellularLocation>
        <location evidence="1">Cellular thylakoid membrane</location>
        <topology evidence="1">Peripheral membrane protein</topology>
        <orientation evidence="1">Cytoplasmic side</orientation>
    </subcellularLocation>
    <text evidence="1">Part of the phycobilisome rod.</text>
</comment>
<comment type="PTM">
    <text evidence="1 2">Contains two covalently linked bilin chromophores.</text>
</comment>
<comment type="similarity">
    <text evidence="3">Belongs to the phycobiliprotein family.</text>
</comment>
<proteinExistence type="inferred from homology"/>
<gene>
    <name type="primary">cpcB</name>
</gene>
<accession>P20777</accession>
<protein>
    <recommendedName>
        <fullName>C-phycocyanin beta subunit</fullName>
    </recommendedName>
</protein>